<dbReference type="EC" id="3.4.19.12" evidence="2"/>
<dbReference type="EMBL" id="AABR06072514">
    <property type="status" value="NOT_ANNOTATED_CDS"/>
    <property type="molecule type" value="Genomic_DNA"/>
</dbReference>
<dbReference type="EMBL" id="CH473973">
    <property type="protein sequence ID" value="EDM13952.1"/>
    <property type="molecule type" value="Genomic_DNA"/>
</dbReference>
<dbReference type="RefSeq" id="NP_001100623.1">
    <property type="nucleotide sequence ID" value="NM_001107153.1"/>
</dbReference>
<dbReference type="SMR" id="D3ZPG5"/>
<dbReference type="FunCoup" id="D3ZPG5">
    <property type="interactions" value="3488"/>
</dbReference>
<dbReference type="STRING" id="10116.ENSRNOP00000034698"/>
<dbReference type="PhosphoSitePlus" id="D3ZPG5"/>
<dbReference type="PaxDb" id="10116-ENSRNOP00000034698"/>
<dbReference type="PeptideAtlas" id="D3ZPG5"/>
<dbReference type="Ensembl" id="ENSRNOT00000030891.5">
    <property type="protein sequence ID" value="ENSRNOP00000034698.4"/>
    <property type="gene ID" value="ENSRNOG00000028556.6"/>
</dbReference>
<dbReference type="GeneID" id="304579"/>
<dbReference type="KEGG" id="rno:304579"/>
<dbReference type="UCSC" id="RGD:1307949">
    <property type="organism name" value="rat"/>
</dbReference>
<dbReference type="AGR" id="RGD:1307949"/>
<dbReference type="CTD" id="84749"/>
<dbReference type="RGD" id="1307949">
    <property type="gene designation" value="Usp30"/>
</dbReference>
<dbReference type="eggNOG" id="KOG1867">
    <property type="taxonomic scope" value="Eukaryota"/>
</dbReference>
<dbReference type="GeneTree" id="ENSGT00550000075075"/>
<dbReference type="HOGENOM" id="CLU_008279_14_2_1"/>
<dbReference type="InParanoid" id="D3ZPG5"/>
<dbReference type="OMA" id="CEREGND"/>
<dbReference type="OrthoDB" id="2248014at2759"/>
<dbReference type="PhylomeDB" id="D3ZPG5"/>
<dbReference type="TreeFam" id="TF105781"/>
<dbReference type="Reactome" id="R-RNO-5689880">
    <property type="pathway name" value="Ub-specific processing proteases"/>
</dbReference>
<dbReference type="Reactome" id="R-RNO-9664873">
    <property type="pathway name" value="Pexophagy"/>
</dbReference>
<dbReference type="PRO" id="PR:D3ZPG5"/>
<dbReference type="Proteomes" id="UP000002494">
    <property type="component" value="Chromosome 12"/>
</dbReference>
<dbReference type="Proteomes" id="UP000234681">
    <property type="component" value="Chromosome 12"/>
</dbReference>
<dbReference type="Bgee" id="ENSRNOG00000028556">
    <property type="expression patterns" value="Expressed in testis and 20 other cell types or tissues"/>
</dbReference>
<dbReference type="ExpressionAtlas" id="D3ZPG5">
    <property type="expression patterns" value="baseline and differential"/>
</dbReference>
<dbReference type="GO" id="GO:0005829">
    <property type="term" value="C:cytosol"/>
    <property type="evidence" value="ECO:0000318"/>
    <property type="project" value="GO_Central"/>
</dbReference>
<dbReference type="GO" id="GO:0005741">
    <property type="term" value="C:mitochondrial outer membrane"/>
    <property type="evidence" value="ECO:0000266"/>
    <property type="project" value="RGD"/>
</dbReference>
<dbReference type="GO" id="GO:0005739">
    <property type="term" value="C:mitochondrion"/>
    <property type="evidence" value="ECO:0000266"/>
    <property type="project" value="RGD"/>
</dbReference>
<dbReference type="GO" id="GO:0005634">
    <property type="term" value="C:nucleus"/>
    <property type="evidence" value="ECO:0000318"/>
    <property type="project" value="GO_Central"/>
</dbReference>
<dbReference type="GO" id="GO:0004843">
    <property type="term" value="F:cysteine-type deubiquitinase activity"/>
    <property type="evidence" value="ECO:0000266"/>
    <property type="project" value="RGD"/>
</dbReference>
<dbReference type="GO" id="GO:0004197">
    <property type="term" value="F:cysteine-type endopeptidase activity"/>
    <property type="evidence" value="ECO:0000266"/>
    <property type="project" value="RGD"/>
</dbReference>
<dbReference type="GO" id="GO:0000422">
    <property type="term" value="P:autophagy of mitochondrion"/>
    <property type="evidence" value="ECO:0000266"/>
    <property type="project" value="RGD"/>
</dbReference>
<dbReference type="GO" id="GO:0008053">
    <property type="term" value="P:mitochondrial fusion"/>
    <property type="evidence" value="ECO:0000266"/>
    <property type="project" value="RGD"/>
</dbReference>
<dbReference type="GO" id="GO:1901525">
    <property type="term" value="P:negative regulation of mitophagy"/>
    <property type="evidence" value="ECO:0000315"/>
    <property type="project" value="RGD"/>
</dbReference>
<dbReference type="GO" id="GO:0016579">
    <property type="term" value="P:protein deubiquitination"/>
    <property type="evidence" value="ECO:0000266"/>
    <property type="project" value="RGD"/>
</dbReference>
<dbReference type="GO" id="GO:0035871">
    <property type="term" value="P:protein K11-linked deubiquitination"/>
    <property type="evidence" value="ECO:0000250"/>
    <property type="project" value="UniProtKB"/>
</dbReference>
<dbReference type="GO" id="GO:0044313">
    <property type="term" value="P:protein K6-linked deubiquitination"/>
    <property type="evidence" value="ECO:0000250"/>
    <property type="project" value="UniProtKB"/>
</dbReference>
<dbReference type="GO" id="GO:0006508">
    <property type="term" value="P:proteolysis"/>
    <property type="evidence" value="ECO:0007669"/>
    <property type="project" value="UniProtKB-KW"/>
</dbReference>
<dbReference type="GO" id="GO:0031647">
    <property type="term" value="P:regulation of protein stability"/>
    <property type="evidence" value="ECO:0000318"/>
    <property type="project" value="GO_Central"/>
</dbReference>
<dbReference type="CDD" id="cd02662">
    <property type="entry name" value="Peptidase_C19F"/>
    <property type="match status" value="1"/>
</dbReference>
<dbReference type="Gene3D" id="3.90.70.10">
    <property type="entry name" value="Cysteine proteinases"/>
    <property type="match status" value="1"/>
</dbReference>
<dbReference type="InterPro" id="IPR038765">
    <property type="entry name" value="Papain-like_cys_pep_sf"/>
</dbReference>
<dbReference type="InterPro" id="IPR050164">
    <property type="entry name" value="Peptidase_C19"/>
</dbReference>
<dbReference type="InterPro" id="IPR001394">
    <property type="entry name" value="Peptidase_C19_UCH"/>
</dbReference>
<dbReference type="InterPro" id="IPR018200">
    <property type="entry name" value="USP_CS"/>
</dbReference>
<dbReference type="InterPro" id="IPR028889">
    <property type="entry name" value="USP_dom"/>
</dbReference>
<dbReference type="PANTHER" id="PTHR24006">
    <property type="entry name" value="UBIQUITIN CARBOXYL-TERMINAL HYDROLASE"/>
    <property type="match status" value="1"/>
</dbReference>
<dbReference type="PANTHER" id="PTHR24006:SF888">
    <property type="entry name" value="UBIQUITIN CARBOXYL-TERMINAL HYDROLASE 30"/>
    <property type="match status" value="1"/>
</dbReference>
<dbReference type="Pfam" id="PF00443">
    <property type="entry name" value="UCH"/>
    <property type="match status" value="1"/>
</dbReference>
<dbReference type="SUPFAM" id="SSF54001">
    <property type="entry name" value="Cysteine proteinases"/>
    <property type="match status" value="1"/>
</dbReference>
<dbReference type="PROSITE" id="PS00972">
    <property type="entry name" value="USP_1"/>
    <property type="match status" value="1"/>
</dbReference>
<dbReference type="PROSITE" id="PS00973">
    <property type="entry name" value="USP_2"/>
    <property type="match status" value="1"/>
</dbReference>
<dbReference type="PROSITE" id="PS50235">
    <property type="entry name" value="USP_3"/>
    <property type="match status" value="1"/>
</dbReference>
<feature type="chain" id="PRO_0000430251" description="Ubiquitin carboxyl-terminal hydrolase 30">
    <location>
        <begin position="1"/>
        <end position="517"/>
    </location>
</feature>
<feature type="topological domain" description="Mitochondrial intermembrane" evidence="3">
    <location>
        <begin position="1"/>
        <end position="35"/>
    </location>
</feature>
<feature type="transmembrane region" description="Helical" evidence="3">
    <location>
        <begin position="36"/>
        <end position="56"/>
    </location>
</feature>
<feature type="topological domain" description="Cytoplasmic" evidence="3">
    <location>
        <begin position="57"/>
        <end position="517"/>
    </location>
</feature>
<feature type="domain" description="USP">
    <location>
        <begin position="68"/>
        <end position="502"/>
    </location>
</feature>
<feature type="region of interest" description="Disordered" evidence="6">
    <location>
        <begin position="364"/>
        <end position="395"/>
    </location>
</feature>
<feature type="active site" description="Nucleophile" evidence="4 5">
    <location>
        <position position="77"/>
    </location>
</feature>
<feature type="active site" description="Proton acceptor" evidence="4 5">
    <location>
        <position position="452"/>
    </location>
</feature>
<feature type="cross-link" description="Glycyl lysine isopeptide (Lys-Gly) (interchain with G-Cter in ubiquitin)" evidence="2">
    <location>
        <position position="235"/>
    </location>
</feature>
<feature type="cross-link" description="Glycyl lysine isopeptide (Lys-Gly) (interchain with G-Cter in ubiquitin)" evidence="2">
    <location>
        <position position="289"/>
    </location>
</feature>
<name>UBP30_RAT</name>
<keyword id="KW-0378">Hydrolase</keyword>
<keyword id="KW-1017">Isopeptide bond</keyword>
<keyword id="KW-0472">Membrane</keyword>
<keyword id="KW-0496">Mitochondrion</keyword>
<keyword id="KW-1000">Mitochondrion outer membrane</keyword>
<keyword id="KW-0645">Protease</keyword>
<keyword id="KW-1185">Reference proteome</keyword>
<keyword id="KW-0788">Thiol protease</keyword>
<keyword id="KW-0812">Transmembrane</keyword>
<keyword id="KW-1133">Transmembrane helix</keyword>
<keyword id="KW-0832">Ubl conjugation</keyword>
<keyword id="KW-0833">Ubl conjugation pathway</keyword>
<gene>
    <name type="primary">Usp30</name>
</gene>
<sequence>MLSSRAQAARTAADKALQRFLRTGAAVRYKVMKNWGVIGGIAAALAAGIYVIWGPITERKKRRKGLVPGLVNLGNTCFMNSLLQGLSACPAFVKWLEEFTTQYSRDQQGPHTHQCLSLTLLSLLKALSCQEVTEEEVLDASCLLDVLRMYRWQISSFEEQDAHELFHVITSSLEDERDRQPRVTHLFDVHSLEQQSEMAPRQVTCHTRGSPHPTTNPWKSQHPFHGRLSSNMVCKHCEHQSPVRFDTFDSLSLSIPAATWGHPLTLDHCLHHFISSESVRDVVCDNCTKIEAKGTQNGEKVEHQRTTFVKQLKLGKLPQCLCIHLQRLSWSSQGTPLKRHEHVQFNEFLMMDFYKYRLLGHKPSQHGPKATESPGSALGVQDTQAAPKPGLSQPAAPKTQFFMNGACSPSLLPALPSPMAFPLPVAPDYSSSMYLFRLMAVVVHHGDMHSGHFVTYRRSPPSAKNPLSTSNQWLWISDDTVRKASLQEVLSSSAYLLFYERVLSRVQQQGREYRSEE</sequence>
<evidence type="ECO:0000250" key="1">
    <source>
        <dbReference type="UniProtKB" id="Q3UN04"/>
    </source>
</evidence>
<evidence type="ECO:0000250" key="2">
    <source>
        <dbReference type="UniProtKB" id="Q70CQ3"/>
    </source>
</evidence>
<evidence type="ECO:0000255" key="3"/>
<evidence type="ECO:0000255" key="4">
    <source>
        <dbReference type="PROSITE-ProRule" id="PRU10092"/>
    </source>
</evidence>
<evidence type="ECO:0000255" key="5">
    <source>
        <dbReference type="PROSITE-ProRule" id="PRU10093"/>
    </source>
</evidence>
<evidence type="ECO:0000256" key="6">
    <source>
        <dbReference type="SAM" id="MobiDB-lite"/>
    </source>
</evidence>
<evidence type="ECO:0000269" key="7">
    <source>
    </source>
</evidence>
<evidence type="ECO:0000305" key="8"/>
<protein>
    <recommendedName>
        <fullName>Ubiquitin carboxyl-terminal hydrolase 30</fullName>
        <ecNumber evidence="2">3.4.19.12</ecNumber>
    </recommendedName>
    <alternativeName>
        <fullName>Deubiquitinating enzyme 30</fullName>
    </alternativeName>
    <alternativeName>
        <fullName>Ubiquitin thioesterase 30</fullName>
    </alternativeName>
    <alternativeName>
        <fullName>Ubiquitin-specific-processing protease 30</fullName>
        <shortName>Ub-specific protease 30</shortName>
    </alternativeName>
</protein>
<comment type="function">
    <text evidence="1 2 7">Deubiquitinating enzyme tethered to the mitochondrial outer membrane that acts as a key inhibitor of mitophagy by counteracting the action of parkin (PRKN): hydrolyzes ubiquitin attached by parkin on target proteins, such as RHOT1/MIRO1 and TOMM20, thereby blocking parkin's ability to drive mitophagy (PubMed:24896179). Preferentially cleaves 'Lys-6'- and 'Lys-11'-linked polyubiquitin chains, 2 types of linkage that participate in mitophagic signaling. Does not cleave efficiently polyubiquitin phosphorylated at 'Ser-65' (By similarity). Acts as a negative regulator of mitochondrial fusion by mediating deubiquitination of MFN1 and MFN2 (By similarity).</text>
</comment>
<comment type="catalytic activity">
    <reaction evidence="2">
        <text>Thiol-dependent hydrolysis of ester, thioester, amide, peptide and isopeptide bonds formed by the C-terminal Gly of ubiquitin (a 76-residue protein attached to proteins as an intracellular targeting signal).</text>
        <dbReference type="EC" id="3.4.19.12"/>
    </reaction>
</comment>
<comment type="activity regulation">
    <text evidence="1">Inhibited by the diterpenoid derivative 15-oxospiramilactone (S3).</text>
</comment>
<comment type="subcellular location">
    <subcellularLocation>
        <location evidence="2">Mitochondrion outer membrane</location>
    </subcellularLocation>
</comment>
<comment type="PTM">
    <text evidence="2">Ubiquitinated by parkin (PRKN) at Lys-235 and Lys-289, leading to its degradation.</text>
</comment>
<comment type="similarity">
    <text evidence="8">Belongs to the peptidase C19 family.</text>
</comment>
<accession>D3ZPG5</accession>
<proteinExistence type="inferred from homology"/>
<reference key="1">
    <citation type="journal article" date="2004" name="Nature">
        <title>Genome sequence of the Brown Norway rat yields insights into mammalian evolution.</title>
        <authorList>
            <person name="Gibbs R.A."/>
            <person name="Weinstock G.M."/>
            <person name="Metzker M.L."/>
            <person name="Muzny D.M."/>
            <person name="Sodergren E.J."/>
            <person name="Scherer S."/>
            <person name="Scott G."/>
            <person name="Steffen D."/>
            <person name="Worley K.C."/>
            <person name="Burch P.E."/>
            <person name="Okwuonu G."/>
            <person name="Hines S."/>
            <person name="Lewis L."/>
            <person name="Deramo C."/>
            <person name="Delgado O."/>
            <person name="Dugan-Rocha S."/>
            <person name="Miner G."/>
            <person name="Morgan M."/>
            <person name="Hawes A."/>
            <person name="Gill R."/>
            <person name="Holt R.A."/>
            <person name="Adams M.D."/>
            <person name="Amanatides P.G."/>
            <person name="Baden-Tillson H."/>
            <person name="Barnstead M."/>
            <person name="Chin S."/>
            <person name="Evans C.A."/>
            <person name="Ferriera S."/>
            <person name="Fosler C."/>
            <person name="Glodek A."/>
            <person name="Gu Z."/>
            <person name="Jennings D."/>
            <person name="Kraft C.L."/>
            <person name="Nguyen T."/>
            <person name="Pfannkoch C.M."/>
            <person name="Sitter C."/>
            <person name="Sutton G.G."/>
            <person name="Venter J.C."/>
            <person name="Woodage T."/>
            <person name="Smith D."/>
            <person name="Lee H.-M."/>
            <person name="Gustafson E."/>
            <person name="Cahill P."/>
            <person name="Kana A."/>
            <person name="Doucette-Stamm L."/>
            <person name="Weinstock K."/>
            <person name="Fechtel K."/>
            <person name="Weiss R.B."/>
            <person name="Dunn D.M."/>
            <person name="Green E.D."/>
            <person name="Blakesley R.W."/>
            <person name="Bouffard G.G."/>
            <person name="De Jong P.J."/>
            <person name="Osoegawa K."/>
            <person name="Zhu B."/>
            <person name="Marra M."/>
            <person name="Schein J."/>
            <person name="Bosdet I."/>
            <person name="Fjell C."/>
            <person name="Jones S."/>
            <person name="Krzywinski M."/>
            <person name="Mathewson C."/>
            <person name="Siddiqui A."/>
            <person name="Wye N."/>
            <person name="McPherson J."/>
            <person name="Zhao S."/>
            <person name="Fraser C.M."/>
            <person name="Shetty J."/>
            <person name="Shatsman S."/>
            <person name="Geer K."/>
            <person name="Chen Y."/>
            <person name="Abramzon S."/>
            <person name="Nierman W.C."/>
            <person name="Havlak P.H."/>
            <person name="Chen R."/>
            <person name="Durbin K.J."/>
            <person name="Egan A."/>
            <person name="Ren Y."/>
            <person name="Song X.-Z."/>
            <person name="Li B."/>
            <person name="Liu Y."/>
            <person name="Qin X."/>
            <person name="Cawley S."/>
            <person name="Cooney A.J."/>
            <person name="D'Souza L.M."/>
            <person name="Martin K."/>
            <person name="Wu J.Q."/>
            <person name="Gonzalez-Garay M.L."/>
            <person name="Jackson A.R."/>
            <person name="Kalafus K.J."/>
            <person name="McLeod M.P."/>
            <person name="Milosavljevic A."/>
            <person name="Virk D."/>
            <person name="Volkov A."/>
            <person name="Wheeler D.A."/>
            <person name="Zhang Z."/>
            <person name="Bailey J.A."/>
            <person name="Eichler E.E."/>
            <person name="Tuzun E."/>
            <person name="Birney E."/>
            <person name="Mongin E."/>
            <person name="Ureta-Vidal A."/>
            <person name="Woodwark C."/>
            <person name="Zdobnov E."/>
            <person name="Bork P."/>
            <person name="Suyama M."/>
            <person name="Torrents D."/>
            <person name="Alexandersson M."/>
            <person name="Trask B.J."/>
            <person name="Young J.M."/>
            <person name="Huang H."/>
            <person name="Wang H."/>
            <person name="Xing H."/>
            <person name="Daniels S."/>
            <person name="Gietzen D."/>
            <person name="Schmidt J."/>
            <person name="Stevens K."/>
            <person name="Vitt U."/>
            <person name="Wingrove J."/>
            <person name="Camara F."/>
            <person name="Mar Alba M."/>
            <person name="Abril J.F."/>
            <person name="Guigo R."/>
            <person name="Smit A."/>
            <person name="Dubchak I."/>
            <person name="Rubin E.M."/>
            <person name="Couronne O."/>
            <person name="Poliakov A."/>
            <person name="Huebner N."/>
            <person name="Ganten D."/>
            <person name="Goesele C."/>
            <person name="Hummel O."/>
            <person name="Kreitler T."/>
            <person name="Lee Y.-A."/>
            <person name="Monti J."/>
            <person name="Schulz H."/>
            <person name="Zimdahl H."/>
            <person name="Himmelbauer H."/>
            <person name="Lehrach H."/>
            <person name="Jacob H.J."/>
            <person name="Bromberg S."/>
            <person name="Gullings-Handley J."/>
            <person name="Jensen-Seaman M.I."/>
            <person name="Kwitek A.E."/>
            <person name="Lazar J."/>
            <person name="Pasko D."/>
            <person name="Tonellato P.J."/>
            <person name="Twigger S."/>
            <person name="Ponting C.P."/>
            <person name="Duarte J.M."/>
            <person name="Rice S."/>
            <person name="Goodstadt L."/>
            <person name="Beatson S.A."/>
            <person name="Emes R.D."/>
            <person name="Winter E.E."/>
            <person name="Webber C."/>
            <person name="Brandt P."/>
            <person name="Nyakatura G."/>
            <person name="Adetobi M."/>
            <person name="Chiaromonte F."/>
            <person name="Elnitski L."/>
            <person name="Eswara P."/>
            <person name="Hardison R.C."/>
            <person name="Hou M."/>
            <person name="Kolbe D."/>
            <person name="Makova K."/>
            <person name="Miller W."/>
            <person name="Nekrutenko A."/>
            <person name="Riemer C."/>
            <person name="Schwartz S."/>
            <person name="Taylor J."/>
            <person name="Yang S."/>
            <person name="Zhang Y."/>
            <person name="Lindpaintner K."/>
            <person name="Andrews T.D."/>
            <person name="Caccamo M."/>
            <person name="Clamp M."/>
            <person name="Clarke L."/>
            <person name="Curwen V."/>
            <person name="Durbin R.M."/>
            <person name="Eyras E."/>
            <person name="Searle S.M."/>
            <person name="Cooper G.M."/>
            <person name="Batzoglou S."/>
            <person name="Brudno M."/>
            <person name="Sidow A."/>
            <person name="Stone E.A."/>
            <person name="Payseur B.A."/>
            <person name="Bourque G."/>
            <person name="Lopez-Otin C."/>
            <person name="Puente X.S."/>
            <person name="Chakrabarti K."/>
            <person name="Chatterji S."/>
            <person name="Dewey C."/>
            <person name="Pachter L."/>
            <person name="Bray N."/>
            <person name="Yap V.B."/>
            <person name="Caspi A."/>
            <person name="Tesler G."/>
            <person name="Pevzner P.A."/>
            <person name="Haussler D."/>
            <person name="Roskin K.M."/>
            <person name="Baertsch R."/>
            <person name="Clawson H."/>
            <person name="Furey T.S."/>
            <person name="Hinrichs A.S."/>
            <person name="Karolchik D."/>
            <person name="Kent W.J."/>
            <person name="Rosenbloom K.R."/>
            <person name="Trumbower H."/>
            <person name="Weirauch M."/>
            <person name="Cooper D.N."/>
            <person name="Stenson P.D."/>
            <person name="Ma B."/>
            <person name="Brent M."/>
            <person name="Arumugam M."/>
            <person name="Shteynberg D."/>
            <person name="Copley R.R."/>
            <person name="Taylor M.S."/>
            <person name="Riethman H."/>
            <person name="Mudunuri U."/>
            <person name="Peterson J."/>
            <person name="Guyer M."/>
            <person name="Felsenfeld A."/>
            <person name="Old S."/>
            <person name="Mockrin S."/>
            <person name="Collins F.S."/>
        </authorList>
    </citation>
    <scope>NUCLEOTIDE SEQUENCE [LARGE SCALE GENOMIC DNA]</scope>
    <source>
        <strain>Brown Norway</strain>
    </source>
</reference>
<reference key="2">
    <citation type="submission" date="2005-07" db="EMBL/GenBank/DDBJ databases">
        <authorList>
            <person name="Mural R.J."/>
            <person name="Adams M.D."/>
            <person name="Myers E.W."/>
            <person name="Smith H.O."/>
            <person name="Venter J.C."/>
        </authorList>
    </citation>
    <scope>NUCLEOTIDE SEQUENCE [LARGE SCALE GENOMIC DNA]</scope>
    <source>
        <strain>Brown Norway</strain>
    </source>
</reference>
<reference key="3">
    <citation type="journal article" date="2014" name="Nature">
        <title>The mitochondrial deubiquitinase USP30 opposes parkin-mediated mitophagy.</title>
        <authorList>
            <person name="Bingol B."/>
            <person name="Tea J.S."/>
            <person name="Phu L."/>
            <person name="Reichelt M."/>
            <person name="Bakalarski C.E."/>
            <person name="Song Q."/>
            <person name="Foreman O."/>
            <person name="Kirkpatrick D.S."/>
            <person name="Sheng M."/>
        </authorList>
    </citation>
    <scope>FUNCTION</scope>
</reference>
<organism>
    <name type="scientific">Rattus norvegicus</name>
    <name type="common">Rat</name>
    <dbReference type="NCBI Taxonomy" id="10116"/>
    <lineage>
        <taxon>Eukaryota</taxon>
        <taxon>Metazoa</taxon>
        <taxon>Chordata</taxon>
        <taxon>Craniata</taxon>
        <taxon>Vertebrata</taxon>
        <taxon>Euteleostomi</taxon>
        <taxon>Mammalia</taxon>
        <taxon>Eutheria</taxon>
        <taxon>Euarchontoglires</taxon>
        <taxon>Glires</taxon>
        <taxon>Rodentia</taxon>
        <taxon>Myomorpha</taxon>
        <taxon>Muroidea</taxon>
        <taxon>Muridae</taxon>
        <taxon>Murinae</taxon>
        <taxon>Rattus</taxon>
    </lineage>
</organism>